<dbReference type="EC" id="5.1.99.6"/>
<dbReference type="EMBL" id="CH940651">
    <property type="protein sequence ID" value="EDW65972.1"/>
    <property type="status" value="ALT_SEQ"/>
    <property type="molecule type" value="Genomic_DNA"/>
</dbReference>
<dbReference type="SMR" id="B4M2R8"/>
<dbReference type="FunCoup" id="B4M2R8">
    <property type="interactions" value="1363"/>
</dbReference>
<dbReference type="STRING" id="7244.B4M2R8"/>
<dbReference type="EnsemblMetazoa" id="FBtr0435221">
    <property type="protein sequence ID" value="FBpp0392212"/>
    <property type="gene ID" value="FBgn0206686"/>
</dbReference>
<dbReference type="EnsemblMetazoa" id="XM_002055735.3">
    <property type="protein sequence ID" value="XP_002055771.2"/>
    <property type="gene ID" value="LOC6632162"/>
</dbReference>
<dbReference type="GeneID" id="6632162"/>
<dbReference type="KEGG" id="dvi:6632162"/>
<dbReference type="CTD" id="128240"/>
<dbReference type="eggNOG" id="KOG2585">
    <property type="taxonomic scope" value="Eukaryota"/>
</dbReference>
<dbReference type="InParanoid" id="B4M2R8"/>
<dbReference type="OrthoDB" id="10064708at2759"/>
<dbReference type="Proteomes" id="UP000008792">
    <property type="component" value="Unassembled WGS sequence"/>
</dbReference>
<dbReference type="GO" id="GO:0005739">
    <property type="term" value="C:mitochondrion"/>
    <property type="evidence" value="ECO:0007669"/>
    <property type="project" value="TreeGrafter"/>
</dbReference>
<dbReference type="GO" id="GO:0046872">
    <property type="term" value="F:metal ion binding"/>
    <property type="evidence" value="ECO:0007669"/>
    <property type="project" value="UniProtKB-KW"/>
</dbReference>
<dbReference type="GO" id="GO:0052856">
    <property type="term" value="F:NAD(P)HX epimerase activity"/>
    <property type="evidence" value="ECO:0007669"/>
    <property type="project" value="UniProtKB-UniRule"/>
</dbReference>
<dbReference type="GO" id="GO:0000166">
    <property type="term" value="F:nucleotide binding"/>
    <property type="evidence" value="ECO:0007669"/>
    <property type="project" value="UniProtKB-KW"/>
</dbReference>
<dbReference type="FunFam" id="3.40.50.10260:FF:000013">
    <property type="entry name" value="NAD(P)H-hydrate epimerase"/>
    <property type="match status" value="1"/>
</dbReference>
<dbReference type="Gene3D" id="3.40.50.10260">
    <property type="entry name" value="YjeF N-terminal domain"/>
    <property type="match status" value="1"/>
</dbReference>
<dbReference type="HAMAP" id="MF_01966">
    <property type="entry name" value="NADHX_epimerase"/>
    <property type="match status" value="1"/>
</dbReference>
<dbReference type="InterPro" id="IPR004443">
    <property type="entry name" value="YjeF_N_dom"/>
</dbReference>
<dbReference type="InterPro" id="IPR036652">
    <property type="entry name" value="YjeF_N_dom_sf"/>
</dbReference>
<dbReference type="InterPro" id="IPR032976">
    <property type="entry name" value="YJEFN_prot_NAXE-like"/>
</dbReference>
<dbReference type="NCBIfam" id="TIGR00197">
    <property type="entry name" value="yjeF_nterm"/>
    <property type="match status" value="1"/>
</dbReference>
<dbReference type="PANTHER" id="PTHR13232">
    <property type="entry name" value="NAD(P)H-HYDRATE EPIMERASE"/>
    <property type="match status" value="1"/>
</dbReference>
<dbReference type="PANTHER" id="PTHR13232:SF10">
    <property type="entry name" value="NAD(P)H-HYDRATE EPIMERASE"/>
    <property type="match status" value="1"/>
</dbReference>
<dbReference type="Pfam" id="PF03853">
    <property type="entry name" value="YjeF_N"/>
    <property type="match status" value="1"/>
</dbReference>
<dbReference type="SUPFAM" id="SSF64153">
    <property type="entry name" value="YjeF N-terminal domain-like"/>
    <property type="match status" value="1"/>
</dbReference>
<dbReference type="PROSITE" id="PS51385">
    <property type="entry name" value="YJEF_N"/>
    <property type="match status" value="1"/>
</dbReference>
<gene>
    <name type="ORF">GJ19543</name>
</gene>
<comment type="function">
    <text evidence="1">Catalyzes the epimerization of the S- and R-forms of NAD(P)HX, a damaged form of NAD(P)H that is a result of enzymatic or heat-dependent hydration. This is a prerequisite for the S-specific NAD(P)H-hydrate dehydratase to allow the repair of both epimers of NAD(P)HX.</text>
</comment>
<comment type="catalytic activity">
    <reaction>
        <text>(6R)-NADHX = (6S)-NADHX</text>
        <dbReference type="Rhea" id="RHEA:32215"/>
        <dbReference type="ChEBI" id="CHEBI:64074"/>
        <dbReference type="ChEBI" id="CHEBI:64075"/>
        <dbReference type="EC" id="5.1.99.6"/>
    </reaction>
</comment>
<comment type="catalytic activity">
    <reaction>
        <text>(6R)-NADPHX = (6S)-NADPHX</text>
        <dbReference type="Rhea" id="RHEA:32227"/>
        <dbReference type="ChEBI" id="CHEBI:64076"/>
        <dbReference type="ChEBI" id="CHEBI:64077"/>
        <dbReference type="EC" id="5.1.99.6"/>
    </reaction>
</comment>
<comment type="cofactor">
    <cofactor evidence="1">
        <name>K(+)</name>
        <dbReference type="ChEBI" id="CHEBI:29103"/>
    </cofactor>
    <text evidence="1">Binds 1 potassium ion per subunit.</text>
</comment>
<comment type="similarity">
    <text evidence="1">Belongs to the NnrE/AIBP family.</text>
</comment>
<comment type="sequence caution" evidence="2">
    <conflict type="erroneous gene model prediction">
        <sequence resource="EMBL-CDS" id="EDW65972"/>
    </conflict>
</comment>
<proteinExistence type="inferred from homology"/>
<name>NNRE_DROVI</name>
<evidence type="ECO:0000255" key="1">
    <source>
        <dbReference type="HAMAP-Rule" id="MF_03159"/>
    </source>
</evidence>
<evidence type="ECO:0000305" key="2"/>
<evidence type="ECO:0000312" key="3">
    <source>
        <dbReference type="EMBL" id="EDW65972.1"/>
    </source>
</evidence>
<sequence>MLKYLNQSEAINVDLELFNEYKFSVDQLMELAGLSCAHAVAKCFPAKDFARVLVCCGPGNNGGDGLVCARHLALMGYTPAIYYPKPTPKPLYENLAHQCQRMEICSITECPRVEEAADSYDLIVDALFGFSFKPPVRADFVSVVELLQQTKLPIASVDIPSGWDVEQGKLNDCDLEPTLLISLTAPKLCAKHFKGKHHFLGGRFVPPALQRKYELNLPAYPGNELCLEL</sequence>
<reference evidence="3" key="1">
    <citation type="journal article" date="2007" name="Nature">
        <title>Evolution of genes and genomes on the Drosophila phylogeny.</title>
        <authorList>
            <consortium name="Drosophila 12 genomes consortium"/>
        </authorList>
    </citation>
    <scope>NUCLEOTIDE SEQUENCE [LARGE SCALE GENOMIC DNA]</scope>
    <source>
        <strain evidence="3">Tucson 15010-1051.87</strain>
    </source>
</reference>
<organism>
    <name type="scientific">Drosophila virilis</name>
    <name type="common">Fruit fly</name>
    <dbReference type="NCBI Taxonomy" id="7244"/>
    <lineage>
        <taxon>Eukaryota</taxon>
        <taxon>Metazoa</taxon>
        <taxon>Ecdysozoa</taxon>
        <taxon>Arthropoda</taxon>
        <taxon>Hexapoda</taxon>
        <taxon>Insecta</taxon>
        <taxon>Pterygota</taxon>
        <taxon>Neoptera</taxon>
        <taxon>Endopterygota</taxon>
        <taxon>Diptera</taxon>
        <taxon>Brachycera</taxon>
        <taxon>Muscomorpha</taxon>
        <taxon>Ephydroidea</taxon>
        <taxon>Drosophilidae</taxon>
        <taxon>Drosophila</taxon>
    </lineage>
</organism>
<keyword id="KW-0413">Isomerase</keyword>
<keyword id="KW-0479">Metal-binding</keyword>
<keyword id="KW-0520">NAD</keyword>
<keyword id="KW-0521">NADP</keyword>
<keyword id="KW-0547">Nucleotide-binding</keyword>
<keyword id="KW-0630">Potassium</keyword>
<keyword id="KW-1185">Reference proteome</keyword>
<protein>
    <recommendedName>
        <fullName evidence="1">NAD(P)H-hydrate epimerase</fullName>
        <ecNumber>5.1.99.6</ecNumber>
    </recommendedName>
    <alternativeName>
        <fullName evidence="1">NAD(P)HX epimerase</fullName>
    </alternativeName>
</protein>
<accession>B4M2R8</accession>
<feature type="chain" id="PRO_0000379432" description="NAD(P)H-hydrate epimerase">
    <location>
        <begin position="1"/>
        <end position="229"/>
    </location>
</feature>
<feature type="domain" description="YjeF N-terminal" evidence="1">
    <location>
        <begin position="10"/>
        <end position="217"/>
    </location>
</feature>
<feature type="binding site" evidence="1">
    <location>
        <begin position="60"/>
        <end position="64"/>
    </location>
    <ligand>
        <name>(6S)-NADPHX</name>
        <dbReference type="ChEBI" id="CHEBI:64076"/>
    </ligand>
</feature>
<feature type="binding site" evidence="1">
    <location>
        <position position="61"/>
    </location>
    <ligand>
        <name>K(+)</name>
        <dbReference type="ChEBI" id="CHEBI:29103"/>
    </ligand>
</feature>
<feature type="binding site" evidence="1">
    <location>
        <position position="125"/>
    </location>
    <ligand>
        <name>K(+)</name>
        <dbReference type="ChEBI" id="CHEBI:29103"/>
    </ligand>
</feature>
<feature type="binding site" evidence="1">
    <location>
        <begin position="129"/>
        <end position="135"/>
    </location>
    <ligand>
        <name>(6S)-NADPHX</name>
        <dbReference type="ChEBI" id="CHEBI:64076"/>
    </ligand>
</feature>
<feature type="binding site" evidence="1">
    <location>
        <position position="158"/>
    </location>
    <ligand>
        <name>(6S)-NADPHX</name>
        <dbReference type="ChEBI" id="CHEBI:64076"/>
    </ligand>
</feature>
<feature type="binding site" evidence="1">
    <location>
        <position position="161"/>
    </location>
    <ligand>
        <name>K(+)</name>
        <dbReference type="ChEBI" id="CHEBI:29103"/>
    </ligand>
</feature>